<gene>
    <name type="ORF">GI11085</name>
</gene>
<sequence>MSSQYSNVENLSPQTIRQVMKELQDMETTPPEGIKVLINESDVTDIQALIDGPAGTPYAVGIFRVKLTLSKDFPQTPPKAYFLTKIFHPNVAANGEICVNTLKKDWKPDLGIKHILLTIKCLLIVPNPESALNEEAGKMLLERYDDYSQRARMMTEIHAQPVKCGVSDAKDDDGPSNKKHAGLDKKLQDKKKEKLLKEKKRMLKRL</sequence>
<evidence type="ECO:0000255" key="1">
    <source>
        <dbReference type="PROSITE-ProRule" id="PRU00388"/>
    </source>
</evidence>
<evidence type="ECO:0000255" key="2">
    <source>
        <dbReference type="PROSITE-ProRule" id="PRU10133"/>
    </source>
</evidence>
<evidence type="ECO:0000256" key="3">
    <source>
        <dbReference type="SAM" id="MobiDB-lite"/>
    </source>
</evidence>
<accession>B4L7V4</accession>
<keyword id="KW-0067">ATP-binding</keyword>
<keyword id="KW-0131">Cell cycle</keyword>
<keyword id="KW-0132">Cell division</keyword>
<keyword id="KW-0547">Nucleotide-binding</keyword>
<keyword id="KW-1185">Reference proteome</keyword>
<keyword id="KW-0808">Transferase</keyword>
<keyword id="KW-0833">Ubl conjugation pathway</keyword>
<dbReference type="EC" id="2.3.2.23"/>
<dbReference type="EMBL" id="CH933814">
    <property type="protein sequence ID" value="EDW05529.1"/>
    <property type="molecule type" value="Genomic_DNA"/>
</dbReference>
<dbReference type="SMR" id="B4L7V4"/>
<dbReference type="FunCoup" id="B4L7V4">
    <property type="interactions" value="1934"/>
</dbReference>
<dbReference type="EnsemblMetazoa" id="FBtr0161810">
    <property type="protein sequence ID" value="FBpp0160302"/>
    <property type="gene ID" value="FBgn0133847"/>
</dbReference>
<dbReference type="EnsemblMetazoa" id="XM_002011503.4">
    <property type="protein sequence ID" value="XP_002011539.1"/>
    <property type="gene ID" value="LOC6585915"/>
</dbReference>
<dbReference type="GeneID" id="6585915"/>
<dbReference type="KEGG" id="dmo:Dmoj_GI11085"/>
<dbReference type="eggNOG" id="KOG0423">
    <property type="taxonomic scope" value="Eukaryota"/>
</dbReference>
<dbReference type="HOGENOM" id="CLU_030988_5_3_1"/>
<dbReference type="InParanoid" id="B4L7V4"/>
<dbReference type="OMA" id="QPAKCGA"/>
<dbReference type="OrthoDB" id="10069349at2759"/>
<dbReference type="PhylomeDB" id="B4L7V4"/>
<dbReference type="UniPathway" id="UPA00143"/>
<dbReference type="Proteomes" id="UP000009192">
    <property type="component" value="Unassembled WGS sequence"/>
</dbReference>
<dbReference type="GO" id="GO:0005524">
    <property type="term" value="F:ATP binding"/>
    <property type="evidence" value="ECO:0007669"/>
    <property type="project" value="UniProtKB-KW"/>
</dbReference>
<dbReference type="GO" id="GO:0061631">
    <property type="term" value="F:ubiquitin conjugating enzyme activity"/>
    <property type="evidence" value="ECO:0007669"/>
    <property type="project" value="UniProtKB-EC"/>
</dbReference>
<dbReference type="GO" id="GO:0031145">
    <property type="term" value="P:anaphase-promoting complex-dependent catabolic process"/>
    <property type="evidence" value="ECO:0000250"/>
    <property type="project" value="UniProtKB"/>
</dbReference>
<dbReference type="GO" id="GO:0051301">
    <property type="term" value="P:cell division"/>
    <property type="evidence" value="ECO:0007669"/>
    <property type="project" value="UniProtKB-KW"/>
</dbReference>
<dbReference type="GO" id="GO:0010458">
    <property type="term" value="P:exit from mitosis"/>
    <property type="evidence" value="ECO:0000250"/>
    <property type="project" value="UniProtKB"/>
</dbReference>
<dbReference type="GO" id="GO:0016567">
    <property type="term" value="P:protein ubiquitination"/>
    <property type="evidence" value="ECO:0007669"/>
    <property type="project" value="UniProtKB-UniPathway"/>
</dbReference>
<dbReference type="CDD" id="cd23804">
    <property type="entry name" value="UBCc_UBE2S"/>
    <property type="match status" value="1"/>
</dbReference>
<dbReference type="FunFam" id="3.10.110.10:FF:000034">
    <property type="entry name" value="Ubiquitin-conjugating enzyme E2 S"/>
    <property type="match status" value="1"/>
</dbReference>
<dbReference type="Gene3D" id="3.10.110.10">
    <property type="entry name" value="Ubiquitin Conjugating Enzyme"/>
    <property type="match status" value="1"/>
</dbReference>
<dbReference type="InterPro" id="IPR050113">
    <property type="entry name" value="Ub_conjugating_enzyme"/>
</dbReference>
<dbReference type="InterPro" id="IPR000608">
    <property type="entry name" value="UBQ-conjugat_E2_core"/>
</dbReference>
<dbReference type="InterPro" id="IPR023313">
    <property type="entry name" value="UBQ-conjugating_AS"/>
</dbReference>
<dbReference type="InterPro" id="IPR016135">
    <property type="entry name" value="UBQ-conjugating_enzyme/RWD"/>
</dbReference>
<dbReference type="PANTHER" id="PTHR24067">
    <property type="entry name" value="UBIQUITIN-CONJUGATING ENZYME E2"/>
    <property type="match status" value="1"/>
</dbReference>
<dbReference type="Pfam" id="PF00179">
    <property type="entry name" value="UQ_con"/>
    <property type="match status" value="1"/>
</dbReference>
<dbReference type="SMART" id="SM00212">
    <property type="entry name" value="UBCc"/>
    <property type="match status" value="1"/>
</dbReference>
<dbReference type="SUPFAM" id="SSF54495">
    <property type="entry name" value="UBC-like"/>
    <property type="match status" value="1"/>
</dbReference>
<dbReference type="PROSITE" id="PS00183">
    <property type="entry name" value="UBC_1"/>
    <property type="match status" value="1"/>
</dbReference>
<dbReference type="PROSITE" id="PS50127">
    <property type="entry name" value="UBC_2"/>
    <property type="match status" value="1"/>
</dbReference>
<reference key="1">
    <citation type="journal article" date="2007" name="Nature">
        <title>Evolution of genes and genomes on the Drosophila phylogeny.</title>
        <authorList>
            <consortium name="Drosophila 12 genomes consortium"/>
        </authorList>
    </citation>
    <scope>NUCLEOTIDE SEQUENCE [LARGE SCALE GENOMIC DNA]</scope>
    <source>
        <strain>Tucson 15081-1352.22</strain>
    </source>
</reference>
<name>UBE2S_DROMO</name>
<comment type="function">
    <text evidence="1">Catalyzes the covalent attachment of ubiquitin to other proteins. Acts as an essential factor of the anaphase promoting complex/cyclosome (APC/C), a cell cycle-regulated ubiquitin ligase that controls progression through mitosis. Acts by specifically elongating polyubiquitin chains initiated by the E2 enzyme vih/UbcH10 on APC/C substrates, enhancing the degradation of APC/C substrates by the proteasome and promoting mitotic exit.</text>
</comment>
<comment type="catalytic activity">
    <reaction evidence="1 2">
        <text>S-ubiquitinyl-[E1 ubiquitin-activating enzyme]-L-cysteine + [E2 ubiquitin-conjugating enzyme]-L-cysteine = [E1 ubiquitin-activating enzyme]-L-cysteine + S-ubiquitinyl-[E2 ubiquitin-conjugating enzyme]-L-cysteine.</text>
        <dbReference type="EC" id="2.3.2.23"/>
    </reaction>
</comment>
<comment type="pathway">
    <text evidence="1">Protein modification; protein ubiquitination.</text>
</comment>
<comment type="similarity">
    <text evidence="1">Belongs to the ubiquitin-conjugating enzyme family.</text>
</comment>
<protein>
    <recommendedName>
        <fullName>Ubiquitin-conjugating enzyme E2 S</fullName>
        <ecNumber>2.3.2.23</ecNumber>
    </recommendedName>
    <alternativeName>
        <fullName>E2 ubiquitin-conjugating enzyme S</fullName>
    </alternativeName>
    <alternativeName>
        <fullName>Ubiquitin carrier protein S</fullName>
    </alternativeName>
    <alternativeName>
        <fullName>Ubiquitin-protein ligase S</fullName>
    </alternativeName>
</protein>
<feature type="chain" id="PRO_0000390441" description="Ubiquitin-conjugating enzyme E2 S">
    <location>
        <begin position="1"/>
        <end position="206"/>
    </location>
</feature>
<feature type="domain" description="UBC core" evidence="1">
    <location>
        <begin position="14"/>
        <end position="160"/>
    </location>
</feature>
<feature type="region of interest" description="Disordered" evidence="3">
    <location>
        <begin position="165"/>
        <end position="191"/>
    </location>
</feature>
<feature type="compositionally biased region" description="Basic and acidic residues" evidence="3">
    <location>
        <begin position="168"/>
        <end position="191"/>
    </location>
</feature>
<feature type="active site" description="Glycyl thioester intermediate" evidence="1 2">
    <location>
        <position position="98"/>
    </location>
</feature>
<proteinExistence type="inferred from homology"/>
<organism>
    <name type="scientific">Drosophila mojavensis</name>
    <name type="common">Fruit fly</name>
    <dbReference type="NCBI Taxonomy" id="7230"/>
    <lineage>
        <taxon>Eukaryota</taxon>
        <taxon>Metazoa</taxon>
        <taxon>Ecdysozoa</taxon>
        <taxon>Arthropoda</taxon>
        <taxon>Hexapoda</taxon>
        <taxon>Insecta</taxon>
        <taxon>Pterygota</taxon>
        <taxon>Neoptera</taxon>
        <taxon>Endopterygota</taxon>
        <taxon>Diptera</taxon>
        <taxon>Brachycera</taxon>
        <taxon>Muscomorpha</taxon>
        <taxon>Ephydroidea</taxon>
        <taxon>Drosophilidae</taxon>
        <taxon>Drosophila</taxon>
    </lineage>
</organism>